<organism>
    <name type="scientific">Salmonella paratyphi C (strain RKS4594)</name>
    <dbReference type="NCBI Taxonomy" id="476213"/>
    <lineage>
        <taxon>Bacteria</taxon>
        <taxon>Pseudomonadati</taxon>
        <taxon>Pseudomonadota</taxon>
        <taxon>Gammaproteobacteria</taxon>
        <taxon>Enterobacterales</taxon>
        <taxon>Enterobacteriaceae</taxon>
        <taxon>Salmonella</taxon>
    </lineage>
</organism>
<reference key="1">
    <citation type="journal article" date="2009" name="PLoS ONE">
        <title>Salmonella paratyphi C: genetic divergence from Salmonella choleraesuis and pathogenic convergence with Salmonella typhi.</title>
        <authorList>
            <person name="Liu W.-Q."/>
            <person name="Feng Y."/>
            <person name="Wang Y."/>
            <person name="Zou Q.-H."/>
            <person name="Chen F."/>
            <person name="Guo J.-T."/>
            <person name="Peng Y.-H."/>
            <person name="Jin Y."/>
            <person name="Li Y.-G."/>
            <person name="Hu S.-N."/>
            <person name="Johnston R.N."/>
            <person name="Liu G.-R."/>
            <person name="Liu S.-L."/>
        </authorList>
    </citation>
    <scope>NUCLEOTIDE SEQUENCE [LARGE SCALE GENOMIC DNA]</scope>
    <source>
        <strain>RKS4594</strain>
    </source>
</reference>
<dbReference type="EC" id="1.7.99.1" evidence="1"/>
<dbReference type="EMBL" id="CP000857">
    <property type="protein sequence ID" value="ACN45107.1"/>
    <property type="molecule type" value="Genomic_DNA"/>
</dbReference>
<dbReference type="RefSeq" id="WP_000458777.1">
    <property type="nucleotide sequence ID" value="NC_012125.1"/>
</dbReference>
<dbReference type="SMR" id="C0PXQ7"/>
<dbReference type="KEGG" id="sei:SPC_0939"/>
<dbReference type="HOGENOM" id="CLU_038344_2_0_6"/>
<dbReference type="Proteomes" id="UP000001599">
    <property type="component" value="Chromosome"/>
</dbReference>
<dbReference type="GO" id="GO:0005737">
    <property type="term" value="C:cytoplasm"/>
    <property type="evidence" value="ECO:0007669"/>
    <property type="project" value="UniProtKB-SubCell"/>
</dbReference>
<dbReference type="GO" id="GO:0051537">
    <property type="term" value="F:2 iron, 2 sulfur cluster binding"/>
    <property type="evidence" value="ECO:0007669"/>
    <property type="project" value="UniProtKB-KW"/>
</dbReference>
<dbReference type="GO" id="GO:0050418">
    <property type="term" value="F:hydroxylamine reductase activity"/>
    <property type="evidence" value="ECO:0007669"/>
    <property type="project" value="UniProtKB-UniRule"/>
</dbReference>
<dbReference type="GO" id="GO:0046872">
    <property type="term" value="F:metal ion binding"/>
    <property type="evidence" value="ECO:0007669"/>
    <property type="project" value="UniProtKB-KW"/>
</dbReference>
<dbReference type="GO" id="GO:0004601">
    <property type="term" value="F:peroxidase activity"/>
    <property type="evidence" value="ECO:0007669"/>
    <property type="project" value="TreeGrafter"/>
</dbReference>
<dbReference type="GO" id="GO:0042542">
    <property type="term" value="P:response to hydrogen peroxide"/>
    <property type="evidence" value="ECO:0007669"/>
    <property type="project" value="TreeGrafter"/>
</dbReference>
<dbReference type="CDD" id="cd01914">
    <property type="entry name" value="HCP"/>
    <property type="match status" value="1"/>
</dbReference>
<dbReference type="FunFam" id="1.20.1270.20:FF:000001">
    <property type="entry name" value="Hydroxylamine reductase"/>
    <property type="match status" value="1"/>
</dbReference>
<dbReference type="FunFam" id="1.20.1270.20:FF:000002">
    <property type="entry name" value="Hydroxylamine reductase"/>
    <property type="match status" value="1"/>
</dbReference>
<dbReference type="FunFam" id="3.40.50.2030:FF:000001">
    <property type="entry name" value="Hydroxylamine reductase"/>
    <property type="match status" value="1"/>
</dbReference>
<dbReference type="FunFam" id="3.40.50.2030:FF:000002">
    <property type="entry name" value="Hydroxylamine reductase"/>
    <property type="match status" value="1"/>
</dbReference>
<dbReference type="Gene3D" id="1.20.1270.20">
    <property type="match status" value="2"/>
</dbReference>
<dbReference type="Gene3D" id="3.40.50.2030">
    <property type="match status" value="2"/>
</dbReference>
<dbReference type="HAMAP" id="MF_00069">
    <property type="entry name" value="Hydroxylam_reduct"/>
    <property type="match status" value="1"/>
</dbReference>
<dbReference type="InterPro" id="IPR004137">
    <property type="entry name" value="HCP/CODH"/>
</dbReference>
<dbReference type="InterPro" id="IPR010048">
    <property type="entry name" value="Hydroxylam_reduct"/>
</dbReference>
<dbReference type="InterPro" id="IPR016099">
    <property type="entry name" value="Prismane-like_a/b-sand"/>
</dbReference>
<dbReference type="InterPro" id="IPR011254">
    <property type="entry name" value="Prismane-like_sf"/>
</dbReference>
<dbReference type="InterPro" id="IPR016100">
    <property type="entry name" value="Prismane_a-bundle"/>
</dbReference>
<dbReference type="NCBIfam" id="TIGR01703">
    <property type="entry name" value="hybrid_clust"/>
    <property type="match status" value="1"/>
</dbReference>
<dbReference type="NCBIfam" id="NF003658">
    <property type="entry name" value="PRK05290.1"/>
    <property type="match status" value="1"/>
</dbReference>
<dbReference type="PANTHER" id="PTHR30109">
    <property type="entry name" value="HYDROXYLAMINE REDUCTASE"/>
    <property type="match status" value="1"/>
</dbReference>
<dbReference type="PANTHER" id="PTHR30109:SF0">
    <property type="entry name" value="HYDROXYLAMINE REDUCTASE"/>
    <property type="match status" value="1"/>
</dbReference>
<dbReference type="Pfam" id="PF03063">
    <property type="entry name" value="Prismane"/>
    <property type="match status" value="1"/>
</dbReference>
<dbReference type="PIRSF" id="PIRSF000076">
    <property type="entry name" value="HCP"/>
    <property type="match status" value="1"/>
</dbReference>
<dbReference type="SUPFAM" id="SSF56821">
    <property type="entry name" value="Prismane protein-like"/>
    <property type="match status" value="1"/>
</dbReference>
<protein>
    <recommendedName>
        <fullName evidence="1">Hydroxylamine reductase</fullName>
        <ecNumber evidence="1">1.7.99.1</ecNumber>
    </recommendedName>
    <alternativeName>
        <fullName evidence="1">Hybrid-cluster protein</fullName>
        <shortName evidence="1">HCP</shortName>
    </alternativeName>
    <alternativeName>
        <fullName evidence="1">Prismane protein</fullName>
    </alternativeName>
</protein>
<accession>C0PXQ7</accession>
<evidence type="ECO:0000255" key="1">
    <source>
        <dbReference type="HAMAP-Rule" id="MF_00069"/>
    </source>
</evidence>
<name>HCP_SALPC</name>
<sequence>MFCVQCEQTIRTPAGNGCSYAQGMCGKTAETSDLQDLLIAALQGLSAWAVKAREYGIINHDVDNFAPRAFFSTLTNVNFDSPRIVGYAREAIALREALKAQCLSVDANAHCDNPMADLQLVSDDLGELQRQAAEFIPNKDKAAIGENILGLRLLCLYGLKGAAAYMEHAHVLGQYDNDIYAQYHKIMAWLGTWPADMNALLECAMEIGQMNFKVMSILDAGETTKYGHPTPTQVNVKATEGKCILISGHDLKDLYNLLEQTEGTGVNVYTHGEMLPAHGYPELRKFKHLVGNYGSGWQNQQVEFARFPGPIVMTSNCIIDPTVGSYDDRIWTRSIVGWPGVSHLEGDDFGPVIAQAQQMAGFPYSEIPHLITVGFGRQTLLGAADTLIDLVSREKLRHIFLVGGCDGARGERNYFTDFATSVPDDCLILTLACGKYRFNKLEFGDIEGLPRLVDAGQCNDAYSAIILAVTLAEKLGCGVNDLPLSLVLSWFEQKAIVILLTLLSLGVKNIVTGPTAPGFFTPDLLAILNEKFGLRSVTTVEEDMKQLLSA</sequence>
<feature type="chain" id="PRO_1000118023" description="Hydroxylamine reductase">
    <location>
        <begin position="1"/>
        <end position="550"/>
    </location>
</feature>
<feature type="binding site" evidence="1">
    <location>
        <position position="3"/>
    </location>
    <ligand>
        <name>[2Fe-2S] cluster</name>
        <dbReference type="ChEBI" id="CHEBI:190135"/>
    </ligand>
</feature>
<feature type="binding site" evidence="1">
    <location>
        <position position="6"/>
    </location>
    <ligand>
        <name>[2Fe-2S] cluster</name>
        <dbReference type="ChEBI" id="CHEBI:190135"/>
    </ligand>
</feature>
<feature type="binding site" evidence="1">
    <location>
        <position position="18"/>
    </location>
    <ligand>
        <name>[2Fe-2S] cluster</name>
        <dbReference type="ChEBI" id="CHEBI:190135"/>
    </ligand>
</feature>
<feature type="binding site" evidence="1">
    <location>
        <position position="25"/>
    </location>
    <ligand>
        <name>[2Fe-2S] cluster</name>
        <dbReference type="ChEBI" id="CHEBI:190135"/>
    </ligand>
</feature>
<feature type="binding site" evidence="1">
    <location>
        <position position="249"/>
    </location>
    <ligand>
        <name>hybrid [4Fe-2O-2S] cluster</name>
        <dbReference type="ChEBI" id="CHEBI:60519"/>
    </ligand>
</feature>
<feature type="binding site" evidence="1">
    <location>
        <position position="273"/>
    </location>
    <ligand>
        <name>hybrid [4Fe-2O-2S] cluster</name>
        <dbReference type="ChEBI" id="CHEBI:60519"/>
    </ligand>
</feature>
<feature type="binding site" evidence="1">
    <location>
        <position position="317"/>
    </location>
    <ligand>
        <name>hybrid [4Fe-2O-2S] cluster</name>
        <dbReference type="ChEBI" id="CHEBI:60519"/>
    </ligand>
</feature>
<feature type="binding site" description="via persulfide group" evidence="1">
    <location>
        <position position="405"/>
    </location>
    <ligand>
        <name>hybrid [4Fe-2O-2S] cluster</name>
        <dbReference type="ChEBI" id="CHEBI:60519"/>
    </ligand>
</feature>
<feature type="binding site" evidence="1">
    <location>
        <position position="433"/>
    </location>
    <ligand>
        <name>hybrid [4Fe-2O-2S] cluster</name>
        <dbReference type="ChEBI" id="CHEBI:60519"/>
    </ligand>
</feature>
<feature type="binding site" evidence="1">
    <location>
        <position position="458"/>
    </location>
    <ligand>
        <name>hybrid [4Fe-2O-2S] cluster</name>
        <dbReference type="ChEBI" id="CHEBI:60519"/>
    </ligand>
</feature>
<feature type="binding site" evidence="1">
    <location>
        <position position="492"/>
    </location>
    <ligand>
        <name>hybrid [4Fe-2O-2S] cluster</name>
        <dbReference type="ChEBI" id="CHEBI:60519"/>
    </ligand>
</feature>
<feature type="binding site" evidence="1">
    <location>
        <position position="494"/>
    </location>
    <ligand>
        <name>hybrid [4Fe-2O-2S] cluster</name>
        <dbReference type="ChEBI" id="CHEBI:60519"/>
    </ligand>
</feature>
<feature type="modified residue" description="Cysteine persulfide" evidence="1">
    <location>
        <position position="405"/>
    </location>
</feature>
<keyword id="KW-0001">2Fe-2S</keyword>
<keyword id="KW-0963">Cytoplasm</keyword>
<keyword id="KW-0408">Iron</keyword>
<keyword id="KW-0411">Iron-sulfur</keyword>
<keyword id="KW-0479">Metal-binding</keyword>
<keyword id="KW-0560">Oxidoreductase</keyword>
<proteinExistence type="inferred from homology"/>
<gene>
    <name evidence="1" type="primary">hcp</name>
    <name type="ordered locus">SPC_0939</name>
</gene>
<comment type="function">
    <text evidence="1">Catalyzes the reduction of hydroxylamine to form NH(3) and H(2)O.</text>
</comment>
<comment type="catalytic activity">
    <reaction evidence="1">
        <text>A + NH4(+) + H2O = hydroxylamine + AH2 + H(+)</text>
        <dbReference type="Rhea" id="RHEA:22052"/>
        <dbReference type="ChEBI" id="CHEBI:13193"/>
        <dbReference type="ChEBI" id="CHEBI:15377"/>
        <dbReference type="ChEBI" id="CHEBI:15378"/>
        <dbReference type="ChEBI" id="CHEBI:15429"/>
        <dbReference type="ChEBI" id="CHEBI:17499"/>
        <dbReference type="ChEBI" id="CHEBI:28938"/>
        <dbReference type="EC" id="1.7.99.1"/>
    </reaction>
</comment>
<comment type="cofactor">
    <cofactor evidence="1">
        <name>[2Fe-2S] cluster</name>
        <dbReference type="ChEBI" id="CHEBI:190135"/>
    </cofactor>
    <text evidence="1">Binds 1 [2Fe-2S] cluster.</text>
</comment>
<comment type="cofactor">
    <cofactor evidence="1">
        <name>hybrid [4Fe-2O-2S] cluster</name>
        <dbReference type="ChEBI" id="CHEBI:60519"/>
    </cofactor>
    <text evidence="1">Binds 1 hybrid [4Fe-2O-2S] cluster.</text>
</comment>
<comment type="subcellular location">
    <subcellularLocation>
        <location evidence="1">Cytoplasm</location>
    </subcellularLocation>
</comment>
<comment type="similarity">
    <text evidence="1">Belongs to the HCP family.</text>
</comment>